<comment type="function">
    <text evidence="1">Hydrolyzes the pyrophosphate bond of UDP-2,3-diacylglucosamine to yield 2,3-diacylglucosamine 1-phosphate (lipid X) and UMP by catalyzing the attack of water at the alpha-P atom. Involved in the biosynthesis of lipid A, a phosphorylated glycolipid that anchors the lipopolysaccharide to the outer membrane of the cell.</text>
</comment>
<comment type="catalytic activity">
    <reaction evidence="1">
        <text>UDP-2-N,3-O-bis[(3R)-3-hydroxytetradecanoyl]-alpha-D-glucosamine + H2O = 2-N,3-O-bis[(3R)-3-hydroxytetradecanoyl]-alpha-D-glucosaminyl 1-phosphate + UMP + 2 H(+)</text>
        <dbReference type="Rhea" id="RHEA:25213"/>
        <dbReference type="ChEBI" id="CHEBI:15377"/>
        <dbReference type="ChEBI" id="CHEBI:15378"/>
        <dbReference type="ChEBI" id="CHEBI:57865"/>
        <dbReference type="ChEBI" id="CHEBI:57957"/>
        <dbReference type="ChEBI" id="CHEBI:78847"/>
        <dbReference type="EC" id="3.6.1.54"/>
    </reaction>
</comment>
<comment type="cofactor">
    <cofactor evidence="1">
        <name>Mn(2+)</name>
        <dbReference type="ChEBI" id="CHEBI:29035"/>
    </cofactor>
    <text evidence="1">Binds 2 Mn(2+) ions per subunit in a binuclear metal center.</text>
</comment>
<comment type="pathway">
    <text evidence="1">Glycolipid biosynthesis; lipid IV(A) biosynthesis; lipid IV(A) from (3R)-3-hydroxytetradecanoyl-[acyl-carrier-protein] and UDP-N-acetyl-alpha-D-glucosamine: step 4/6.</text>
</comment>
<comment type="subcellular location">
    <subcellularLocation>
        <location evidence="1">Cell inner membrane</location>
        <topology evidence="1">Peripheral membrane protein</topology>
        <orientation evidence="1">Cytoplasmic side</orientation>
    </subcellularLocation>
</comment>
<comment type="similarity">
    <text evidence="1">Belongs to the LpxH family.</text>
</comment>
<protein>
    <recommendedName>
        <fullName evidence="1">UDP-2,3-diacylglucosamine hydrolase</fullName>
        <ecNumber evidence="1">3.6.1.54</ecNumber>
    </recommendedName>
    <alternativeName>
        <fullName evidence="1">UDP-2,3-diacylglucosamine diphosphatase</fullName>
    </alternativeName>
</protein>
<name>LPXH_AERS4</name>
<proteinExistence type="inferred from homology"/>
<accession>A4SLC4</accession>
<feature type="chain" id="PRO_1000025046" description="UDP-2,3-diacylglucosamine hydrolase">
    <location>
        <begin position="1"/>
        <end position="254"/>
    </location>
</feature>
<feature type="binding site" evidence="1">
    <location>
        <position position="8"/>
    </location>
    <ligand>
        <name>Mn(2+)</name>
        <dbReference type="ChEBI" id="CHEBI:29035"/>
        <label>1</label>
    </ligand>
</feature>
<feature type="binding site" evidence="1">
    <location>
        <position position="10"/>
    </location>
    <ligand>
        <name>Mn(2+)</name>
        <dbReference type="ChEBI" id="CHEBI:29035"/>
        <label>1</label>
    </ligand>
</feature>
<feature type="binding site" evidence="1">
    <location>
        <position position="41"/>
    </location>
    <ligand>
        <name>Mn(2+)</name>
        <dbReference type="ChEBI" id="CHEBI:29035"/>
        <label>1</label>
    </ligand>
</feature>
<feature type="binding site" evidence="1">
    <location>
        <position position="41"/>
    </location>
    <ligand>
        <name>Mn(2+)</name>
        <dbReference type="ChEBI" id="CHEBI:29035"/>
        <label>2</label>
    </ligand>
</feature>
<feature type="binding site" evidence="1">
    <location>
        <begin position="79"/>
        <end position="80"/>
    </location>
    <ligand>
        <name>substrate</name>
    </ligand>
</feature>
<feature type="binding site" evidence="1">
    <location>
        <position position="79"/>
    </location>
    <ligand>
        <name>Mn(2+)</name>
        <dbReference type="ChEBI" id="CHEBI:29035"/>
        <label>2</label>
    </ligand>
</feature>
<feature type="binding site" evidence="1">
    <location>
        <position position="114"/>
    </location>
    <ligand>
        <name>Mn(2+)</name>
        <dbReference type="ChEBI" id="CHEBI:29035"/>
        <label>2</label>
    </ligand>
</feature>
<feature type="binding site" evidence="1">
    <location>
        <position position="122"/>
    </location>
    <ligand>
        <name>substrate</name>
    </ligand>
</feature>
<feature type="binding site" evidence="1">
    <location>
        <position position="160"/>
    </location>
    <ligand>
        <name>substrate</name>
    </ligand>
</feature>
<feature type="binding site" evidence="1">
    <location>
        <position position="164"/>
    </location>
    <ligand>
        <name>substrate</name>
    </ligand>
</feature>
<feature type="binding site" evidence="1">
    <location>
        <position position="167"/>
    </location>
    <ligand>
        <name>substrate</name>
    </ligand>
</feature>
<feature type="binding site" evidence="1">
    <location>
        <position position="195"/>
    </location>
    <ligand>
        <name>Mn(2+)</name>
        <dbReference type="ChEBI" id="CHEBI:29035"/>
        <label>2</label>
    </ligand>
</feature>
<feature type="binding site" evidence="1">
    <location>
        <position position="195"/>
    </location>
    <ligand>
        <name>substrate</name>
    </ligand>
</feature>
<feature type="binding site" evidence="1">
    <location>
        <position position="197"/>
    </location>
    <ligand>
        <name>Mn(2+)</name>
        <dbReference type="ChEBI" id="CHEBI:29035"/>
        <label>1</label>
    </ligand>
</feature>
<reference key="1">
    <citation type="journal article" date="2008" name="BMC Genomics">
        <title>The genome of Aeromonas salmonicida subsp. salmonicida A449: insights into the evolution of a fish pathogen.</title>
        <authorList>
            <person name="Reith M.E."/>
            <person name="Singh R.K."/>
            <person name="Curtis B."/>
            <person name="Boyd J.M."/>
            <person name="Bouevitch A."/>
            <person name="Kimball J."/>
            <person name="Munholland J."/>
            <person name="Murphy C."/>
            <person name="Sarty D."/>
            <person name="Williams J."/>
            <person name="Nash J.H."/>
            <person name="Johnson S.C."/>
            <person name="Brown L.L."/>
        </authorList>
    </citation>
    <scope>NUCLEOTIDE SEQUENCE [LARGE SCALE GENOMIC DNA]</scope>
    <source>
        <strain>A449</strain>
    </source>
</reference>
<dbReference type="EC" id="3.6.1.54" evidence="1"/>
<dbReference type="EMBL" id="CP000644">
    <property type="protein sequence ID" value="ABO89696.1"/>
    <property type="molecule type" value="Genomic_DNA"/>
</dbReference>
<dbReference type="RefSeq" id="WP_011898588.1">
    <property type="nucleotide sequence ID" value="NC_009348.1"/>
</dbReference>
<dbReference type="SMR" id="A4SLC4"/>
<dbReference type="STRING" id="29491.GCA_000820065_03276"/>
<dbReference type="KEGG" id="asa:ASA_1612"/>
<dbReference type="PATRIC" id="fig|382245.13.peg.1592"/>
<dbReference type="eggNOG" id="COG2908">
    <property type="taxonomic scope" value="Bacteria"/>
</dbReference>
<dbReference type="HOGENOM" id="CLU_074586_0_0_6"/>
<dbReference type="UniPathway" id="UPA00359">
    <property type="reaction ID" value="UER00480"/>
</dbReference>
<dbReference type="Proteomes" id="UP000000225">
    <property type="component" value="Chromosome"/>
</dbReference>
<dbReference type="GO" id="GO:0005737">
    <property type="term" value="C:cytoplasm"/>
    <property type="evidence" value="ECO:0007669"/>
    <property type="project" value="InterPro"/>
</dbReference>
<dbReference type="GO" id="GO:0019897">
    <property type="term" value="C:extrinsic component of plasma membrane"/>
    <property type="evidence" value="ECO:0007669"/>
    <property type="project" value="UniProtKB-UniRule"/>
</dbReference>
<dbReference type="GO" id="GO:0030145">
    <property type="term" value="F:manganese ion binding"/>
    <property type="evidence" value="ECO:0007669"/>
    <property type="project" value="UniProtKB-UniRule"/>
</dbReference>
<dbReference type="GO" id="GO:0008758">
    <property type="term" value="F:UDP-2,3-diacylglucosamine hydrolase activity"/>
    <property type="evidence" value="ECO:0007669"/>
    <property type="project" value="UniProtKB-UniRule"/>
</dbReference>
<dbReference type="GO" id="GO:0009245">
    <property type="term" value="P:lipid A biosynthetic process"/>
    <property type="evidence" value="ECO:0007669"/>
    <property type="project" value="UniProtKB-UniRule"/>
</dbReference>
<dbReference type="CDD" id="cd07398">
    <property type="entry name" value="MPP_YbbF-LpxH"/>
    <property type="match status" value="1"/>
</dbReference>
<dbReference type="Gene3D" id="3.60.21.10">
    <property type="match status" value="1"/>
</dbReference>
<dbReference type="HAMAP" id="MF_00575">
    <property type="entry name" value="LpxH"/>
    <property type="match status" value="1"/>
</dbReference>
<dbReference type="InterPro" id="IPR004843">
    <property type="entry name" value="Calcineurin-like_PHP_ApaH"/>
</dbReference>
<dbReference type="InterPro" id="IPR043461">
    <property type="entry name" value="LpxH-like"/>
</dbReference>
<dbReference type="InterPro" id="IPR029052">
    <property type="entry name" value="Metallo-depent_PP-like"/>
</dbReference>
<dbReference type="InterPro" id="IPR010138">
    <property type="entry name" value="UDP-diacylglucosamine_Hdrlase"/>
</dbReference>
<dbReference type="NCBIfam" id="TIGR01854">
    <property type="entry name" value="lipid_A_lpxH"/>
    <property type="match status" value="1"/>
</dbReference>
<dbReference type="NCBIfam" id="NF003743">
    <property type="entry name" value="PRK05340.1"/>
    <property type="match status" value="1"/>
</dbReference>
<dbReference type="PANTHER" id="PTHR34990:SF1">
    <property type="entry name" value="UDP-2,3-DIACYLGLUCOSAMINE HYDROLASE"/>
    <property type="match status" value="1"/>
</dbReference>
<dbReference type="PANTHER" id="PTHR34990">
    <property type="entry name" value="UDP-2,3-DIACYLGLUCOSAMINE HYDROLASE-RELATED"/>
    <property type="match status" value="1"/>
</dbReference>
<dbReference type="Pfam" id="PF00149">
    <property type="entry name" value="Metallophos"/>
    <property type="match status" value="1"/>
</dbReference>
<dbReference type="SUPFAM" id="SSF56300">
    <property type="entry name" value="Metallo-dependent phosphatases"/>
    <property type="match status" value="1"/>
</dbReference>
<gene>
    <name evidence="1" type="primary">lpxH</name>
    <name type="ordered locus">ASA_1612</name>
</gene>
<organism>
    <name type="scientific">Aeromonas salmonicida (strain A449)</name>
    <dbReference type="NCBI Taxonomy" id="382245"/>
    <lineage>
        <taxon>Bacteria</taxon>
        <taxon>Pseudomonadati</taxon>
        <taxon>Pseudomonadota</taxon>
        <taxon>Gammaproteobacteria</taxon>
        <taxon>Aeromonadales</taxon>
        <taxon>Aeromonadaceae</taxon>
        <taxon>Aeromonas</taxon>
    </lineage>
</organism>
<keyword id="KW-0997">Cell inner membrane</keyword>
<keyword id="KW-1003">Cell membrane</keyword>
<keyword id="KW-0378">Hydrolase</keyword>
<keyword id="KW-0441">Lipid A biosynthesis</keyword>
<keyword id="KW-0444">Lipid biosynthesis</keyword>
<keyword id="KW-0443">Lipid metabolism</keyword>
<keyword id="KW-0464">Manganese</keyword>
<keyword id="KW-0472">Membrane</keyword>
<keyword id="KW-0479">Metal-binding</keyword>
<evidence type="ECO:0000255" key="1">
    <source>
        <dbReference type="HAMAP-Rule" id="MF_00575"/>
    </source>
</evidence>
<sequence length="254" mass="28657">MSTLFISDIHLCSDRPDMTAALVRFLERDAPGADALYVLGDLFEFWIGDDDPNPLHHAIADAFAALRQRGVSIYFIHGNRDFLLGRQFAKRSGMTLLADPCVIDLYGERVLLSHGDLLCTLDLGYQKLRRITQLKWLRWLFLRLPLTRRLAIACKMRGQSQMENVQKSQTIMDVTPAAVDALLRQHGCQLLIHGHTHRPAIHDFTLDGQPARRIVLGDWFEQGSVLVCSPGEQRLEQRTLPSLNPAGAHESDNL</sequence>